<sequence>MNPLIFKENRPFDLIAVGRLCVDLNANETQRPMEETRTFTKYVGGSPANIAIGAARLGLQTGFIGKVSDDQMGRFITGYLKDNKINTDQIPIDCTGAVTGLAFTEIKSPEDCSILMYRDNVADLNLDPTEVSEDYIKQSKALLISGTALAKSPSREAVFLALEYARKHDVVVFFDVDYRPYTWQSEAETAVYYNLAAEKSDVIIGTREEFDMMEKLLNYEKSNDQVTAERWFSHHAKIVVIKHGGDGSIAYTRDGQSHRGGIFKTKVLKTFGAGDSYASAFIYGLMQGLEIPQAMRLGGASASIVISKHSCSDAMPTRAEISAFMETAEELV</sequence>
<dbReference type="EC" id="2.7.1.92" evidence="1"/>
<dbReference type="EMBL" id="CP001215">
    <property type="protein sequence ID" value="ACP14084.1"/>
    <property type="molecule type" value="Genomic_DNA"/>
</dbReference>
<dbReference type="RefSeq" id="WP_001068616.1">
    <property type="nucleotide sequence ID" value="NC_012581.1"/>
</dbReference>
<dbReference type="SMR" id="C3LHY4"/>
<dbReference type="GeneID" id="45022375"/>
<dbReference type="KEGG" id="bah:BAMEG_2090"/>
<dbReference type="HOGENOM" id="CLU_027634_6_0_9"/>
<dbReference type="UniPathway" id="UPA00076">
    <property type="reaction ID" value="UER00146"/>
</dbReference>
<dbReference type="GO" id="GO:0047590">
    <property type="term" value="F:5-dehydro-2-deoxygluconokinase activity"/>
    <property type="evidence" value="ECO:0007669"/>
    <property type="project" value="UniProtKB-UniRule"/>
</dbReference>
<dbReference type="GO" id="GO:0005524">
    <property type="term" value="F:ATP binding"/>
    <property type="evidence" value="ECO:0007669"/>
    <property type="project" value="UniProtKB-UniRule"/>
</dbReference>
<dbReference type="GO" id="GO:0019310">
    <property type="term" value="P:inositol catabolic process"/>
    <property type="evidence" value="ECO:0007669"/>
    <property type="project" value="UniProtKB-UniRule"/>
</dbReference>
<dbReference type="CDD" id="cd01166">
    <property type="entry name" value="KdgK"/>
    <property type="match status" value="1"/>
</dbReference>
<dbReference type="Gene3D" id="3.40.1190.20">
    <property type="match status" value="1"/>
</dbReference>
<dbReference type="Gene3D" id="2.20.150.10">
    <property type="entry name" value="putative 5-dehydro-2- deoxygluconokinase"/>
    <property type="match status" value="1"/>
</dbReference>
<dbReference type="HAMAP" id="MF_01668">
    <property type="entry name" value="IolC"/>
    <property type="match status" value="1"/>
</dbReference>
<dbReference type="InterPro" id="IPR002173">
    <property type="entry name" value="Carboh/pur_kinase_PfkB_CS"/>
</dbReference>
<dbReference type="InterPro" id="IPR022841">
    <property type="entry name" value="DKG_kinase_firmi"/>
</dbReference>
<dbReference type="InterPro" id="IPR030830">
    <property type="entry name" value="Myo_inos_IolC"/>
</dbReference>
<dbReference type="InterPro" id="IPR023314">
    <property type="entry name" value="Myo_inos_IolC-like_sf"/>
</dbReference>
<dbReference type="InterPro" id="IPR050306">
    <property type="entry name" value="PfkB_Carbo_kinase"/>
</dbReference>
<dbReference type="InterPro" id="IPR011611">
    <property type="entry name" value="PfkB_dom"/>
</dbReference>
<dbReference type="InterPro" id="IPR029056">
    <property type="entry name" value="Ribokinase-like"/>
</dbReference>
<dbReference type="NCBIfam" id="TIGR04382">
    <property type="entry name" value="myo_inos_iolC_N"/>
    <property type="match status" value="1"/>
</dbReference>
<dbReference type="PANTHER" id="PTHR43085:SF49">
    <property type="entry name" value="5-DEHYDRO-2-DEOXYGLUCONOKINASE"/>
    <property type="match status" value="1"/>
</dbReference>
<dbReference type="PANTHER" id="PTHR43085">
    <property type="entry name" value="HEXOKINASE FAMILY MEMBER"/>
    <property type="match status" value="1"/>
</dbReference>
<dbReference type="Pfam" id="PF00294">
    <property type="entry name" value="PfkB"/>
    <property type="match status" value="1"/>
</dbReference>
<dbReference type="SUPFAM" id="SSF53613">
    <property type="entry name" value="Ribokinase-like"/>
    <property type="match status" value="1"/>
</dbReference>
<dbReference type="PROSITE" id="PS00584">
    <property type="entry name" value="PFKB_KINASES_2"/>
    <property type="match status" value="1"/>
</dbReference>
<proteinExistence type="inferred from homology"/>
<gene>
    <name evidence="1" type="primary">iolC</name>
    <name type="ordered locus">BAMEG_2090</name>
</gene>
<comment type="function">
    <text evidence="1">Catalyzes the phosphorylation of 5-dehydro-2-deoxy-D-gluconate (2-deoxy-5-keto-D-gluconate or DKG) to 6-phospho-5-dehydro-2-deoxy-D-gluconate (DKGP).</text>
</comment>
<comment type="catalytic activity">
    <reaction evidence="1">
        <text>5-dehydro-2-deoxy-D-gluconate + ATP = 6-phospho-5-dehydro-2-deoxy-D-gluconate + ADP + H(+)</text>
        <dbReference type="Rhea" id="RHEA:13497"/>
        <dbReference type="ChEBI" id="CHEBI:15378"/>
        <dbReference type="ChEBI" id="CHEBI:16669"/>
        <dbReference type="ChEBI" id="CHEBI:30616"/>
        <dbReference type="ChEBI" id="CHEBI:57949"/>
        <dbReference type="ChEBI" id="CHEBI:456216"/>
        <dbReference type="EC" id="2.7.1.92"/>
    </reaction>
</comment>
<comment type="pathway">
    <text evidence="1">Polyol metabolism; myo-inositol degradation into acetyl-CoA; acetyl-CoA from myo-inositol: step 5/7.</text>
</comment>
<comment type="similarity">
    <text evidence="1">Belongs to the carbohydrate kinase PfkB family.</text>
</comment>
<feature type="chain" id="PRO_1000187304" description="5-dehydro-2-deoxygluconokinase">
    <location>
        <begin position="1"/>
        <end position="332"/>
    </location>
</feature>
<evidence type="ECO:0000255" key="1">
    <source>
        <dbReference type="HAMAP-Rule" id="MF_01668"/>
    </source>
</evidence>
<name>IOLC_BACAC</name>
<organism>
    <name type="scientific">Bacillus anthracis (strain CDC 684 / NRRL 3495)</name>
    <dbReference type="NCBI Taxonomy" id="568206"/>
    <lineage>
        <taxon>Bacteria</taxon>
        <taxon>Bacillati</taxon>
        <taxon>Bacillota</taxon>
        <taxon>Bacilli</taxon>
        <taxon>Bacillales</taxon>
        <taxon>Bacillaceae</taxon>
        <taxon>Bacillus</taxon>
        <taxon>Bacillus cereus group</taxon>
    </lineage>
</organism>
<reference key="1">
    <citation type="submission" date="2008-10" db="EMBL/GenBank/DDBJ databases">
        <title>Genome sequence of Bacillus anthracis str. CDC 684.</title>
        <authorList>
            <person name="Dodson R.J."/>
            <person name="Munk A.C."/>
            <person name="Brettin T."/>
            <person name="Bruce D."/>
            <person name="Detter C."/>
            <person name="Tapia R."/>
            <person name="Han C."/>
            <person name="Sutton G."/>
            <person name="Sims D."/>
        </authorList>
    </citation>
    <scope>NUCLEOTIDE SEQUENCE [LARGE SCALE GENOMIC DNA]</scope>
    <source>
        <strain>CDC 684 / NRRL 3495</strain>
    </source>
</reference>
<keyword id="KW-0067">ATP-binding</keyword>
<keyword id="KW-0418">Kinase</keyword>
<keyword id="KW-0547">Nucleotide-binding</keyword>
<keyword id="KW-0808">Transferase</keyword>
<accession>C3LHY4</accession>
<protein>
    <recommendedName>
        <fullName evidence="1">5-dehydro-2-deoxygluconokinase</fullName>
        <ecNumber evidence="1">2.7.1.92</ecNumber>
    </recommendedName>
    <alternativeName>
        <fullName evidence="1">2-deoxy-5-keto-D-gluconate kinase</fullName>
        <shortName evidence="1">DKG kinase</shortName>
    </alternativeName>
</protein>